<name>NADE_LATSS</name>
<protein>
    <recommendedName>
        <fullName evidence="1">NH(3)-dependent NAD(+) synthetase</fullName>
        <ecNumber evidence="1">6.3.1.5</ecNumber>
    </recommendedName>
</protein>
<keyword id="KW-0067">ATP-binding</keyword>
<keyword id="KW-0436">Ligase</keyword>
<keyword id="KW-0460">Magnesium</keyword>
<keyword id="KW-0479">Metal-binding</keyword>
<keyword id="KW-0520">NAD</keyword>
<keyword id="KW-0547">Nucleotide-binding</keyword>
<keyword id="KW-1185">Reference proteome</keyword>
<dbReference type="EC" id="6.3.1.5" evidence="1"/>
<dbReference type="EMBL" id="CR936503">
    <property type="protein sequence ID" value="CAI55876.1"/>
    <property type="molecule type" value="Genomic_DNA"/>
</dbReference>
<dbReference type="RefSeq" id="WP_011375263.1">
    <property type="nucleotide sequence ID" value="NC_007576.1"/>
</dbReference>
<dbReference type="SMR" id="Q38VA7"/>
<dbReference type="STRING" id="314315.LCA_1569"/>
<dbReference type="KEGG" id="lsa:LCA_1569"/>
<dbReference type="eggNOG" id="COG0171">
    <property type="taxonomic scope" value="Bacteria"/>
</dbReference>
<dbReference type="HOGENOM" id="CLU_059327_3_0_9"/>
<dbReference type="OrthoDB" id="9803818at2"/>
<dbReference type="UniPathway" id="UPA00253">
    <property type="reaction ID" value="UER00333"/>
</dbReference>
<dbReference type="Proteomes" id="UP000002707">
    <property type="component" value="Chromosome"/>
</dbReference>
<dbReference type="GO" id="GO:0005737">
    <property type="term" value="C:cytoplasm"/>
    <property type="evidence" value="ECO:0007669"/>
    <property type="project" value="InterPro"/>
</dbReference>
<dbReference type="GO" id="GO:0005524">
    <property type="term" value="F:ATP binding"/>
    <property type="evidence" value="ECO:0007669"/>
    <property type="project" value="UniProtKB-UniRule"/>
</dbReference>
<dbReference type="GO" id="GO:0004359">
    <property type="term" value="F:glutaminase activity"/>
    <property type="evidence" value="ECO:0007669"/>
    <property type="project" value="InterPro"/>
</dbReference>
<dbReference type="GO" id="GO:0046872">
    <property type="term" value="F:metal ion binding"/>
    <property type="evidence" value="ECO:0007669"/>
    <property type="project" value="UniProtKB-KW"/>
</dbReference>
<dbReference type="GO" id="GO:0003952">
    <property type="term" value="F:NAD+ synthase (glutamine-hydrolyzing) activity"/>
    <property type="evidence" value="ECO:0007669"/>
    <property type="project" value="InterPro"/>
</dbReference>
<dbReference type="GO" id="GO:0008795">
    <property type="term" value="F:NAD+ synthase activity"/>
    <property type="evidence" value="ECO:0007669"/>
    <property type="project" value="UniProtKB-UniRule"/>
</dbReference>
<dbReference type="GO" id="GO:0009435">
    <property type="term" value="P:NAD biosynthetic process"/>
    <property type="evidence" value="ECO:0007669"/>
    <property type="project" value="UniProtKB-UniRule"/>
</dbReference>
<dbReference type="CDD" id="cd00553">
    <property type="entry name" value="NAD_synthase"/>
    <property type="match status" value="1"/>
</dbReference>
<dbReference type="FunFam" id="3.40.50.620:FF:000015">
    <property type="entry name" value="NH(3)-dependent NAD(+) synthetase"/>
    <property type="match status" value="1"/>
</dbReference>
<dbReference type="Gene3D" id="3.40.50.620">
    <property type="entry name" value="HUPs"/>
    <property type="match status" value="1"/>
</dbReference>
<dbReference type="HAMAP" id="MF_00193">
    <property type="entry name" value="NadE_ammonia_dep"/>
    <property type="match status" value="1"/>
</dbReference>
<dbReference type="InterPro" id="IPR022310">
    <property type="entry name" value="NAD/GMP_synthase"/>
</dbReference>
<dbReference type="InterPro" id="IPR003694">
    <property type="entry name" value="NAD_synthase"/>
</dbReference>
<dbReference type="InterPro" id="IPR022926">
    <property type="entry name" value="NH(3)-dep_NAD(+)_synth"/>
</dbReference>
<dbReference type="InterPro" id="IPR014729">
    <property type="entry name" value="Rossmann-like_a/b/a_fold"/>
</dbReference>
<dbReference type="NCBIfam" id="TIGR00552">
    <property type="entry name" value="nadE"/>
    <property type="match status" value="1"/>
</dbReference>
<dbReference type="NCBIfam" id="NF001979">
    <property type="entry name" value="PRK00768.1"/>
    <property type="match status" value="1"/>
</dbReference>
<dbReference type="PANTHER" id="PTHR23090">
    <property type="entry name" value="NH 3 /GLUTAMINE-DEPENDENT NAD + SYNTHETASE"/>
    <property type="match status" value="1"/>
</dbReference>
<dbReference type="PANTHER" id="PTHR23090:SF7">
    <property type="entry name" value="NH(3)-DEPENDENT NAD(+) SYNTHETASE"/>
    <property type="match status" value="1"/>
</dbReference>
<dbReference type="Pfam" id="PF02540">
    <property type="entry name" value="NAD_synthase"/>
    <property type="match status" value="1"/>
</dbReference>
<dbReference type="SUPFAM" id="SSF52402">
    <property type="entry name" value="Adenine nucleotide alpha hydrolases-like"/>
    <property type="match status" value="1"/>
</dbReference>
<gene>
    <name evidence="1" type="primary">nadE</name>
    <name type="ordered locus">LCA_1569</name>
</gene>
<proteinExistence type="inferred from homology"/>
<organism>
    <name type="scientific">Latilactobacillus sakei subsp. sakei (strain 23K)</name>
    <name type="common">Lactobacillus sakei subsp. sakei</name>
    <dbReference type="NCBI Taxonomy" id="314315"/>
    <lineage>
        <taxon>Bacteria</taxon>
        <taxon>Bacillati</taxon>
        <taxon>Bacillota</taxon>
        <taxon>Bacilli</taxon>
        <taxon>Lactobacillales</taxon>
        <taxon>Lactobacillaceae</taxon>
        <taxon>Latilactobacillus</taxon>
    </lineage>
</organism>
<reference key="1">
    <citation type="journal article" date="2005" name="Nat. Biotechnol.">
        <title>The complete genome sequence of the meat-borne lactic acid bacterium Lactobacillus sakei 23K.</title>
        <authorList>
            <person name="Chaillou S."/>
            <person name="Champomier-Verges M.-C."/>
            <person name="Cornet M."/>
            <person name="Crutz-Le Coq A.-M."/>
            <person name="Dudez A.-M."/>
            <person name="Martin V."/>
            <person name="Beaufils S."/>
            <person name="Darbon-Rongere E."/>
            <person name="Bossy R."/>
            <person name="Loux V."/>
            <person name="Zagorec M."/>
        </authorList>
    </citation>
    <scope>NUCLEOTIDE SEQUENCE [LARGE SCALE GENOMIC DNA]</scope>
    <source>
        <strain>23K</strain>
    </source>
</reference>
<feature type="chain" id="PRO_1000077571" description="NH(3)-dependent NAD(+) synthetase">
    <location>
        <begin position="1"/>
        <end position="275"/>
    </location>
</feature>
<feature type="binding site" evidence="1">
    <location>
        <begin position="47"/>
        <end position="54"/>
    </location>
    <ligand>
        <name>ATP</name>
        <dbReference type="ChEBI" id="CHEBI:30616"/>
    </ligand>
</feature>
<feature type="binding site" evidence="1">
    <location>
        <position position="53"/>
    </location>
    <ligand>
        <name>Mg(2+)</name>
        <dbReference type="ChEBI" id="CHEBI:18420"/>
    </ligand>
</feature>
<feature type="binding site" evidence="1">
    <location>
        <position position="141"/>
    </location>
    <ligand>
        <name>deamido-NAD(+)</name>
        <dbReference type="ChEBI" id="CHEBI:58437"/>
    </ligand>
</feature>
<feature type="binding site" evidence="1">
    <location>
        <position position="161"/>
    </location>
    <ligand>
        <name>ATP</name>
        <dbReference type="ChEBI" id="CHEBI:30616"/>
    </ligand>
</feature>
<feature type="binding site" evidence="1">
    <location>
        <position position="166"/>
    </location>
    <ligand>
        <name>Mg(2+)</name>
        <dbReference type="ChEBI" id="CHEBI:18420"/>
    </ligand>
</feature>
<feature type="binding site" evidence="1">
    <location>
        <position position="174"/>
    </location>
    <ligand>
        <name>deamido-NAD(+)</name>
        <dbReference type="ChEBI" id="CHEBI:58437"/>
    </ligand>
</feature>
<feature type="binding site" evidence="1">
    <location>
        <position position="181"/>
    </location>
    <ligand>
        <name>deamido-NAD(+)</name>
        <dbReference type="ChEBI" id="CHEBI:58437"/>
    </ligand>
</feature>
<feature type="binding site" evidence="1">
    <location>
        <position position="190"/>
    </location>
    <ligand>
        <name>ATP</name>
        <dbReference type="ChEBI" id="CHEBI:30616"/>
    </ligand>
</feature>
<feature type="binding site" evidence="1">
    <location>
        <position position="212"/>
    </location>
    <ligand>
        <name>ATP</name>
        <dbReference type="ChEBI" id="CHEBI:30616"/>
    </ligand>
</feature>
<feature type="binding site" evidence="1">
    <location>
        <begin position="261"/>
        <end position="262"/>
    </location>
    <ligand>
        <name>deamido-NAD(+)</name>
        <dbReference type="ChEBI" id="CHEBI:58437"/>
    </ligand>
</feature>
<evidence type="ECO:0000255" key="1">
    <source>
        <dbReference type="HAMAP-Rule" id="MF_00193"/>
    </source>
</evidence>
<comment type="function">
    <text evidence="1">Catalyzes the ATP-dependent amidation of deamido-NAD to form NAD. Uses ammonia as a nitrogen source.</text>
</comment>
<comment type="catalytic activity">
    <reaction evidence="1">
        <text>deamido-NAD(+) + NH4(+) + ATP = AMP + diphosphate + NAD(+) + H(+)</text>
        <dbReference type="Rhea" id="RHEA:21188"/>
        <dbReference type="ChEBI" id="CHEBI:15378"/>
        <dbReference type="ChEBI" id="CHEBI:28938"/>
        <dbReference type="ChEBI" id="CHEBI:30616"/>
        <dbReference type="ChEBI" id="CHEBI:33019"/>
        <dbReference type="ChEBI" id="CHEBI:57540"/>
        <dbReference type="ChEBI" id="CHEBI:58437"/>
        <dbReference type="ChEBI" id="CHEBI:456215"/>
        <dbReference type="EC" id="6.3.1.5"/>
    </reaction>
</comment>
<comment type="pathway">
    <text evidence="1">Cofactor biosynthesis; NAD(+) biosynthesis; NAD(+) from deamido-NAD(+) (ammonia route): step 1/1.</text>
</comment>
<comment type="subunit">
    <text evidence="1">Homodimer.</text>
</comment>
<comment type="similarity">
    <text evidence="1">Belongs to the NAD synthetase family.</text>
</comment>
<sequence length="275" mass="30282">MNALQAEIIAALKTQPTIDPAKEIRRSVDFMKAYLKKNTFLKSYVLGISGGQDSTLVGALTEKAMQEMRAETGDESYQFIAVRLPYGEQADESDAMAAIEFMAADQVKRVNIKGSVDAMVQSLAETGVTVSDFNKGNIKARVRMIAQYGIAGENSGAVLGTDHSAESITGFYTKFGDGGADLVPIFRLNKRQGKAMLAELGAPKHLYEKVPTADLEEDRPALPDELALGVTYDQIDDYLEGRQVSEEAATKIENWHKKTAHKRHLPITIYDTFWQ</sequence>
<accession>Q38VA7</accession>